<sequence length="374" mass="40565">MKYLLPSAAAGLLLLAAQPTMAANTGGYATTDGGDVAGAVKKTARSMQDIIDIIEAAKLDSNGKKVKGGAYPLVITYNGNEDALIKAAENDICGQWKKDARGVEIKEFTKGITIIGTNGSSANFGIWLTKSSDIVIRNMRFGYMPGGAQDGDAIRIDNTPNVWIDHNEIFAKNFECAGTKDGDTTFESAIDIKKASTNVTVSYNYIHGIKKVGLSGFSSSDTGRDLTYHHNIYDDVNARLPLQRGGQVHAYNNLYTGITSSGLNVRQKGIALIERNWFENAKNPVTSRYDGSNFGTWELRNNNVMSPADFAKYNITWDKDTKPYVNAEDWKSTGTFASVPYSYSPVSAQCVKDKLANYAGVNKNLAVLTAANCN</sequence>
<proteinExistence type="inferred from homology"/>
<accession>P0C1C3</accession>
<accession>O31035</accession>
<accession>P14006</accession>
<accession>P29171</accession>
<accession>Q47470</accession>
<name>PLY3_PECCC</name>
<keyword id="KW-0106">Calcium</keyword>
<keyword id="KW-1015">Disulfide bond</keyword>
<keyword id="KW-0456">Lyase</keyword>
<keyword id="KW-0479">Metal-binding</keyword>
<keyword id="KW-0964">Secreted</keyword>
<keyword id="KW-0732">Signal</keyword>
<evidence type="ECO:0000250" key="1"/>
<evidence type="ECO:0000255" key="2"/>
<evidence type="ECO:0000305" key="3"/>
<comment type="function">
    <text>Involved in maceration and soft-rotting of plant tissue.</text>
</comment>
<comment type="catalytic activity">
    <reaction>
        <text>Eliminative cleavage of (1-&gt;4)-alpha-D-galacturonan to give oligosaccharides with 4-deoxy-alpha-D-galact-4-enuronosyl groups at their non-reducing ends.</text>
        <dbReference type="EC" id="4.2.2.2"/>
    </reaction>
</comment>
<comment type="cofactor">
    <cofactor evidence="1">
        <name>Ca(2+)</name>
        <dbReference type="ChEBI" id="CHEBI:29108"/>
    </cofactor>
    <text evidence="1">Binds 1 Ca(2+) ion per subunit.</text>
</comment>
<comment type="pathway">
    <text>Glycan metabolism; pectin degradation; 2-dehydro-3-deoxy-D-gluconate from pectin: step 2/5.</text>
</comment>
<comment type="subcellular location">
    <subcellularLocation>
        <location>Secreted</location>
    </subcellularLocation>
</comment>
<comment type="similarity">
    <text evidence="3">Belongs to the polysaccharide lyase 1 family. PLADES subfamily.</text>
</comment>
<gene>
    <name type="primary">pel3</name>
    <name type="synonym">pelC</name>
    <name type="synonym">pelCI</name>
</gene>
<protein>
    <recommendedName>
        <fullName>Pectate lyase 3</fullName>
        <ecNumber>4.2.2.2</ecNumber>
    </recommendedName>
    <alternativeName>
        <fullName>Pectate lyase C</fullName>
        <shortName>PLC</shortName>
    </alternativeName>
    <alternativeName>
        <fullName>Pectate lyase III</fullName>
        <shortName>PEL III</shortName>
    </alternativeName>
</protein>
<reference key="1">
    <citation type="journal article" date="1989" name="Mol. Microbiol.">
        <title>Extracellular and periplasmic isoenzymes of pectate lyase from Erwinia carotovora subspecies carotovora belong to different gene families.</title>
        <authorList>
            <person name="Hinton J.C.D."/>
            <person name="Sidebotham J.M."/>
            <person name="Gill D.R."/>
            <person name="Salmond G.P.C."/>
        </authorList>
    </citation>
    <scope>NUCLEOTIDE SEQUENCE [GENOMIC DNA]</scope>
    <source>
        <strain>SCRI 193</strain>
    </source>
</reference>
<reference key="2">
    <citation type="submission" date="1997-09" db="EMBL/GenBank/DDBJ databases">
        <authorList>
            <person name="Lim S.T."/>
            <person name="Park Y.W."/>
            <person name="Yun H.D."/>
        </authorList>
    </citation>
    <scope>NUCLEOTIDE SEQUENCE [GENOMIC DNA]</scope>
    <source>
        <strain>LY34</strain>
    </source>
</reference>
<dbReference type="EC" id="4.2.2.2"/>
<dbReference type="EMBL" id="X16398">
    <property type="protein sequence ID" value="CAA34433.1"/>
    <property type="molecule type" value="Genomic_DNA"/>
</dbReference>
<dbReference type="EMBL" id="AF026033">
    <property type="protein sequence ID" value="AAB82289.1"/>
    <property type="molecule type" value="Genomic_DNA"/>
</dbReference>
<dbReference type="PIR" id="S07652">
    <property type="entry name" value="WZWCPC"/>
</dbReference>
<dbReference type="RefSeq" id="WP_010297068.1">
    <property type="nucleotide sequence ID" value="NZ_BRCK01000005.1"/>
</dbReference>
<dbReference type="SMR" id="P0C1C3"/>
<dbReference type="CAZy" id="PL1">
    <property type="family name" value="Polysaccharide Lyase Family 1"/>
</dbReference>
<dbReference type="GeneID" id="61346284"/>
<dbReference type="UniPathway" id="UPA00545">
    <property type="reaction ID" value="UER00824"/>
</dbReference>
<dbReference type="GO" id="GO:0005576">
    <property type="term" value="C:extracellular region"/>
    <property type="evidence" value="ECO:0007669"/>
    <property type="project" value="UniProtKB-SubCell"/>
</dbReference>
<dbReference type="GO" id="GO:0046872">
    <property type="term" value="F:metal ion binding"/>
    <property type="evidence" value="ECO:0007669"/>
    <property type="project" value="UniProtKB-KW"/>
</dbReference>
<dbReference type="GO" id="GO:0030570">
    <property type="term" value="F:pectate lyase activity"/>
    <property type="evidence" value="ECO:0007669"/>
    <property type="project" value="UniProtKB-EC"/>
</dbReference>
<dbReference type="GO" id="GO:0045490">
    <property type="term" value="P:pectin catabolic process"/>
    <property type="evidence" value="ECO:0007669"/>
    <property type="project" value="UniProtKB-UniPathway"/>
</dbReference>
<dbReference type="Gene3D" id="2.160.20.10">
    <property type="entry name" value="Single-stranded right-handed beta-helix, Pectin lyase-like"/>
    <property type="match status" value="1"/>
</dbReference>
<dbReference type="InterPro" id="IPR002022">
    <property type="entry name" value="Pec_lyase"/>
</dbReference>
<dbReference type="InterPro" id="IPR012334">
    <property type="entry name" value="Pectin_lyas_fold"/>
</dbReference>
<dbReference type="InterPro" id="IPR011050">
    <property type="entry name" value="Pectin_lyase_fold/virulence"/>
</dbReference>
<dbReference type="InterPro" id="IPR045032">
    <property type="entry name" value="PEL"/>
</dbReference>
<dbReference type="PANTHER" id="PTHR31683">
    <property type="entry name" value="PECTATE LYASE 18-RELATED"/>
    <property type="match status" value="1"/>
</dbReference>
<dbReference type="PANTHER" id="PTHR31683:SF18">
    <property type="entry name" value="PECTATE LYASE 21-RELATED"/>
    <property type="match status" value="1"/>
</dbReference>
<dbReference type="Pfam" id="PF00544">
    <property type="entry name" value="Pectate_lyase_4"/>
    <property type="match status" value="1"/>
</dbReference>
<dbReference type="SMART" id="SM00656">
    <property type="entry name" value="Amb_all"/>
    <property type="match status" value="1"/>
</dbReference>
<dbReference type="SUPFAM" id="SSF51126">
    <property type="entry name" value="Pectin lyase-like"/>
    <property type="match status" value="1"/>
</dbReference>
<feature type="signal peptide" evidence="1">
    <location>
        <begin position="1"/>
        <end position="22"/>
    </location>
</feature>
<feature type="chain" id="PRO_0000234451" description="Pectate lyase 3">
    <location>
        <begin position="23"/>
        <end position="374"/>
    </location>
</feature>
<feature type="active site" evidence="2">
    <location>
        <position position="239"/>
    </location>
</feature>
<feature type="binding site" evidence="1">
    <location>
        <position position="150"/>
    </location>
    <ligand>
        <name>Ca(2+)</name>
        <dbReference type="ChEBI" id="CHEBI:29108"/>
    </ligand>
</feature>
<feature type="binding site" evidence="1">
    <location>
        <position position="152"/>
    </location>
    <ligand>
        <name>Ca(2+)</name>
        <dbReference type="ChEBI" id="CHEBI:29108"/>
    </ligand>
</feature>
<feature type="binding site" evidence="1">
    <location>
        <position position="187"/>
    </location>
    <ligand>
        <name>Ca(2+)</name>
        <dbReference type="ChEBI" id="CHEBI:29108"/>
    </ligand>
</feature>
<feature type="binding site" evidence="1">
    <location>
        <position position="191"/>
    </location>
    <ligand>
        <name>Ca(2+)</name>
        <dbReference type="ChEBI" id="CHEBI:29108"/>
    </ligand>
</feature>
<feature type="disulfide bond" evidence="1">
    <location>
        <begin position="93"/>
        <end position="176"/>
    </location>
</feature>
<feature type="disulfide bond" evidence="1">
    <location>
        <begin position="350"/>
        <end position="373"/>
    </location>
</feature>
<feature type="sequence conflict" description="In Ref. 2; AAB82289." evidence="3" ref="2">
    <original>ND</original>
    <variation>AN</variation>
    <location>
        <begin position="90"/>
        <end position="91"/>
    </location>
</feature>
<feature type="sequence conflict" description="In Ref. 2; AAB82289." evidence="3" ref="2">
    <original>K</original>
    <variation>S</variation>
    <location>
        <position position="97"/>
    </location>
</feature>
<feature type="sequence conflict" description="In Ref. 2; AAB82289." evidence="3" ref="2">
    <original>T</original>
    <variation>V</variation>
    <location>
        <position position="129"/>
    </location>
</feature>
<feature type="sequence conflict" description="In Ref. 2; AAB82289." evidence="3" ref="2">
    <original>S</original>
    <variation>P</variation>
    <location>
        <position position="132"/>
    </location>
</feature>
<feature type="sequence conflict" description="In Ref. 2; AAB82289." evidence="3" ref="2">
    <original>M</original>
    <variation>Y</variation>
    <location>
        <position position="144"/>
    </location>
</feature>
<feature type="sequence conflict" description="In Ref. 2; AAB82289." evidence="3" ref="2">
    <original>N</original>
    <variation>D</variation>
    <location>
        <position position="237"/>
    </location>
</feature>
<feature type="sequence conflict" description="In Ref. 2; AAB82289." evidence="3" ref="2">
    <original>T</original>
    <variation>S</variation>
    <location>
        <position position="321"/>
    </location>
</feature>
<organism>
    <name type="scientific">Pectobacterium carotovorum subsp. carotovorum</name>
    <name type="common">Erwinia carotovora subsp. carotovora</name>
    <dbReference type="NCBI Taxonomy" id="555"/>
    <lineage>
        <taxon>Bacteria</taxon>
        <taxon>Pseudomonadati</taxon>
        <taxon>Pseudomonadota</taxon>
        <taxon>Gammaproteobacteria</taxon>
        <taxon>Enterobacterales</taxon>
        <taxon>Pectobacteriaceae</taxon>
        <taxon>Pectobacterium</taxon>
    </lineage>
</organism>